<keyword id="KW-0067">ATP-binding</keyword>
<keyword id="KW-0315">Glutamine amidotransferase</keyword>
<keyword id="KW-0332">GMP biosynthesis</keyword>
<keyword id="KW-0436">Ligase</keyword>
<keyword id="KW-0547">Nucleotide-binding</keyword>
<keyword id="KW-0658">Purine biosynthesis</keyword>
<keyword id="KW-1185">Reference proteome</keyword>
<organism>
    <name type="scientific">Haemophilus influenzae (strain ATCC 51907 / DSM 11121 / KW20 / Rd)</name>
    <dbReference type="NCBI Taxonomy" id="71421"/>
    <lineage>
        <taxon>Bacteria</taxon>
        <taxon>Pseudomonadati</taxon>
        <taxon>Pseudomonadota</taxon>
        <taxon>Gammaproteobacteria</taxon>
        <taxon>Pasteurellales</taxon>
        <taxon>Pasteurellaceae</taxon>
        <taxon>Haemophilus</taxon>
    </lineage>
</organism>
<feature type="chain" id="PRO_0000140131" description="GMP synthase [glutamine-hydrolyzing]">
    <location>
        <begin position="1"/>
        <end position="523"/>
    </location>
</feature>
<feature type="domain" description="Glutamine amidotransferase type-1">
    <location>
        <begin position="8"/>
        <end position="205"/>
    </location>
</feature>
<feature type="domain" description="GMPS ATP-PPase">
    <location>
        <begin position="206"/>
        <end position="398"/>
    </location>
</feature>
<feature type="active site" description="Nucleophile" evidence="1">
    <location>
        <position position="85"/>
    </location>
</feature>
<feature type="active site" evidence="1">
    <location>
        <position position="179"/>
    </location>
</feature>
<feature type="active site" evidence="1">
    <location>
        <position position="181"/>
    </location>
</feature>
<feature type="binding site" evidence="1">
    <location>
        <begin position="233"/>
        <end position="239"/>
    </location>
    <ligand>
        <name>ATP</name>
        <dbReference type="ChEBI" id="CHEBI:30616"/>
    </ligand>
</feature>
<proteinExistence type="inferred from homology"/>
<dbReference type="EC" id="6.3.5.2"/>
<dbReference type="EMBL" id="L42023">
    <property type="protein sequence ID" value="AAC21891.1"/>
    <property type="molecule type" value="Genomic_DNA"/>
</dbReference>
<dbReference type="PIR" id="I64055">
    <property type="entry name" value="I64055"/>
</dbReference>
<dbReference type="RefSeq" id="NP_438394.1">
    <property type="nucleotide sequence ID" value="NC_000907.1"/>
</dbReference>
<dbReference type="SMR" id="P44335"/>
<dbReference type="STRING" id="71421.HI_0222"/>
<dbReference type="EnsemblBacteria" id="AAC21891">
    <property type="protein sequence ID" value="AAC21891"/>
    <property type="gene ID" value="HI_0222"/>
</dbReference>
<dbReference type="KEGG" id="hin:HI_0222"/>
<dbReference type="PATRIC" id="fig|71421.8.peg.235"/>
<dbReference type="eggNOG" id="COG0518">
    <property type="taxonomic scope" value="Bacteria"/>
</dbReference>
<dbReference type="eggNOG" id="COG0519">
    <property type="taxonomic scope" value="Bacteria"/>
</dbReference>
<dbReference type="HOGENOM" id="CLU_014340_0_5_6"/>
<dbReference type="OrthoDB" id="9802219at2"/>
<dbReference type="PhylomeDB" id="P44335"/>
<dbReference type="BioCyc" id="HINF71421:G1GJ1-239-MONOMER"/>
<dbReference type="UniPathway" id="UPA00189">
    <property type="reaction ID" value="UER00296"/>
</dbReference>
<dbReference type="Proteomes" id="UP000000579">
    <property type="component" value="Chromosome"/>
</dbReference>
<dbReference type="GO" id="GO:0005829">
    <property type="term" value="C:cytosol"/>
    <property type="evidence" value="ECO:0000318"/>
    <property type="project" value="GO_Central"/>
</dbReference>
<dbReference type="GO" id="GO:0005524">
    <property type="term" value="F:ATP binding"/>
    <property type="evidence" value="ECO:0007669"/>
    <property type="project" value="UniProtKB-UniRule"/>
</dbReference>
<dbReference type="GO" id="GO:0003921">
    <property type="term" value="F:GMP synthase activity"/>
    <property type="evidence" value="ECO:0000318"/>
    <property type="project" value="GO_Central"/>
</dbReference>
<dbReference type="GO" id="GO:0006177">
    <property type="term" value="P:GMP biosynthetic process"/>
    <property type="evidence" value="ECO:0000318"/>
    <property type="project" value="GO_Central"/>
</dbReference>
<dbReference type="CDD" id="cd01742">
    <property type="entry name" value="GATase1_GMP_Synthase"/>
    <property type="match status" value="1"/>
</dbReference>
<dbReference type="CDD" id="cd01997">
    <property type="entry name" value="GMP_synthase_C"/>
    <property type="match status" value="1"/>
</dbReference>
<dbReference type="FunFam" id="3.30.300.10:FF:000002">
    <property type="entry name" value="GMP synthase [glutamine-hydrolyzing]"/>
    <property type="match status" value="1"/>
</dbReference>
<dbReference type="FunFam" id="3.40.50.620:FF:000001">
    <property type="entry name" value="GMP synthase [glutamine-hydrolyzing]"/>
    <property type="match status" value="1"/>
</dbReference>
<dbReference type="FunFam" id="3.40.50.880:FF:000001">
    <property type="entry name" value="GMP synthase [glutamine-hydrolyzing]"/>
    <property type="match status" value="1"/>
</dbReference>
<dbReference type="Gene3D" id="3.30.300.10">
    <property type="match status" value="1"/>
</dbReference>
<dbReference type="Gene3D" id="3.40.50.880">
    <property type="match status" value="1"/>
</dbReference>
<dbReference type="Gene3D" id="3.40.50.620">
    <property type="entry name" value="HUPs"/>
    <property type="match status" value="1"/>
</dbReference>
<dbReference type="HAMAP" id="MF_00344">
    <property type="entry name" value="GMP_synthase"/>
    <property type="match status" value="1"/>
</dbReference>
<dbReference type="InterPro" id="IPR029062">
    <property type="entry name" value="Class_I_gatase-like"/>
</dbReference>
<dbReference type="InterPro" id="IPR017926">
    <property type="entry name" value="GATASE"/>
</dbReference>
<dbReference type="InterPro" id="IPR001674">
    <property type="entry name" value="GMP_synth_C"/>
</dbReference>
<dbReference type="InterPro" id="IPR004739">
    <property type="entry name" value="GMP_synth_GATase"/>
</dbReference>
<dbReference type="InterPro" id="IPR022955">
    <property type="entry name" value="GMP_synthase"/>
</dbReference>
<dbReference type="InterPro" id="IPR025777">
    <property type="entry name" value="GMPS_ATP_PPase_dom"/>
</dbReference>
<dbReference type="InterPro" id="IPR022310">
    <property type="entry name" value="NAD/GMP_synthase"/>
</dbReference>
<dbReference type="InterPro" id="IPR014729">
    <property type="entry name" value="Rossmann-like_a/b/a_fold"/>
</dbReference>
<dbReference type="NCBIfam" id="TIGR00884">
    <property type="entry name" value="guaA_Cterm"/>
    <property type="match status" value="1"/>
</dbReference>
<dbReference type="NCBIfam" id="TIGR00888">
    <property type="entry name" value="guaA_Nterm"/>
    <property type="match status" value="1"/>
</dbReference>
<dbReference type="NCBIfam" id="NF000848">
    <property type="entry name" value="PRK00074.1"/>
    <property type="match status" value="1"/>
</dbReference>
<dbReference type="PANTHER" id="PTHR11922:SF2">
    <property type="entry name" value="GMP SYNTHASE [GLUTAMINE-HYDROLYZING]"/>
    <property type="match status" value="1"/>
</dbReference>
<dbReference type="PANTHER" id="PTHR11922">
    <property type="entry name" value="GMP SYNTHASE-RELATED"/>
    <property type="match status" value="1"/>
</dbReference>
<dbReference type="Pfam" id="PF00117">
    <property type="entry name" value="GATase"/>
    <property type="match status" value="1"/>
</dbReference>
<dbReference type="Pfam" id="PF00958">
    <property type="entry name" value="GMP_synt_C"/>
    <property type="match status" value="1"/>
</dbReference>
<dbReference type="Pfam" id="PF02540">
    <property type="entry name" value="NAD_synthase"/>
    <property type="match status" value="1"/>
</dbReference>
<dbReference type="PRINTS" id="PR00099">
    <property type="entry name" value="CPSGATASE"/>
</dbReference>
<dbReference type="PRINTS" id="PR00096">
    <property type="entry name" value="GATASE"/>
</dbReference>
<dbReference type="SUPFAM" id="SSF52402">
    <property type="entry name" value="Adenine nucleotide alpha hydrolases-like"/>
    <property type="match status" value="1"/>
</dbReference>
<dbReference type="SUPFAM" id="SSF52317">
    <property type="entry name" value="Class I glutamine amidotransferase-like"/>
    <property type="match status" value="1"/>
</dbReference>
<dbReference type="SUPFAM" id="SSF54810">
    <property type="entry name" value="GMP synthetase C-terminal dimerisation domain"/>
    <property type="match status" value="1"/>
</dbReference>
<dbReference type="PROSITE" id="PS51273">
    <property type="entry name" value="GATASE_TYPE_1"/>
    <property type="match status" value="1"/>
</dbReference>
<dbReference type="PROSITE" id="PS51553">
    <property type="entry name" value="GMPS_ATP_PPASE"/>
    <property type="match status" value="1"/>
</dbReference>
<comment type="function">
    <text evidence="1">Catalyzes the synthesis of GMP from XMP.</text>
</comment>
<comment type="catalytic activity">
    <reaction>
        <text>XMP + L-glutamine + ATP + H2O = GMP + L-glutamate + AMP + diphosphate + 2 H(+)</text>
        <dbReference type="Rhea" id="RHEA:11680"/>
        <dbReference type="ChEBI" id="CHEBI:15377"/>
        <dbReference type="ChEBI" id="CHEBI:15378"/>
        <dbReference type="ChEBI" id="CHEBI:29985"/>
        <dbReference type="ChEBI" id="CHEBI:30616"/>
        <dbReference type="ChEBI" id="CHEBI:33019"/>
        <dbReference type="ChEBI" id="CHEBI:57464"/>
        <dbReference type="ChEBI" id="CHEBI:58115"/>
        <dbReference type="ChEBI" id="CHEBI:58359"/>
        <dbReference type="ChEBI" id="CHEBI:456215"/>
        <dbReference type="EC" id="6.3.5.2"/>
    </reaction>
</comment>
<comment type="pathway">
    <text>Purine metabolism; GMP biosynthesis; GMP from XMP (L-Gln route): step 1/1.</text>
</comment>
<comment type="subunit">
    <text evidence="1">Homodimer.</text>
</comment>
<gene>
    <name type="primary">guaA</name>
    <name type="ordered locus">HI_0222</name>
</gene>
<evidence type="ECO:0000250" key="1"/>
<name>GUAA_HAEIN</name>
<accession>P44335</accession>
<sequence length="523" mass="58186">MTNIHYHKILILDFGSQYTQLIARRVREIGVYCELWAWDVTEQQIREFAPTGIILSGSPESTTEENSPRAPEYVFNAGVPVLGICYGMQTMAMQLGGLTETSDHREFGYASVSLENSTALFANLNDNLTASEPKLDVWMSHGDKVTRLPENFKVTGTTLTCPIAAMSDESRRFYGVQFHPEVTHTKKGLELLTNFVVNICGCETKWTAENIIEDAVARIKEQVGDDEVILGLSGGVDSSVVALLLHRAIGKNLHCVFVDNGLLRLHEGDQVMEMFGDKFGLNITRVDAESRFLGELAGVSDPEAKRKIIGKVFVDVFDDESKKLTNVKWLAQGTIYPDVIESAASKTGKAHVIKSHHNVGGLPDYMKLGLVEPLRELFKDEVRKIGLALGLPAEMINRHPFPGPGLGVRVLGEVKKEYCDLLRRADAIFIEELRNSGWYEKTSQAFSVFLPVKSVGVMGDGRKYDWVISLRAVETIDFMTAHWAHLPYDLLGKVSNRIINEVNGISRVVYDISGKPPATIEWE</sequence>
<protein>
    <recommendedName>
        <fullName>GMP synthase [glutamine-hydrolyzing]</fullName>
        <ecNumber>6.3.5.2</ecNumber>
    </recommendedName>
    <alternativeName>
        <fullName>GMP synthetase</fullName>
    </alternativeName>
    <alternativeName>
        <fullName>Glutamine amidotransferase</fullName>
    </alternativeName>
</protein>
<reference key="1">
    <citation type="journal article" date="1995" name="Science">
        <title>Whole-genome random sequencing and assembly of Haemophilus influenzae Rd.</title>
        <authorList>
            <person name="Fleischmann R.D."/>
            <person name="Adams M.D."/>
            <person name="White O."/>
            <person name="Clayton R.A."/>
            <person name="Kirkness E.F."/>
            <person name="Kerlavage A.R."/>
            <person name="Bult C.J."/>
            <person name="Tomb J.-F."/>
            <person name="Dougherty B.A."/>
            <person name="Merrick J.M."/>
            <person name="McKenney K."/>
            <person name="Sutton G.G."/>
            <person name="FitzHugh W."/>
            <person name="Fields C.A."/>
            <person name="Gocayne J.D."/>
            <person name="Scott J.D."/>
            <person name="Shirley R."/>
            <person name="Liu L.-I."/>
            <person name="Glodek A."/>
            <person name="Kelley J.M."/>
            <person name="Weidman J.F."/>
            <person name="Phillips C.A."/>
            <person name="Spriggs T."/>
            <person name="Hedblom E."/>
            <person name="Cotton M.D."/>
            <person name="Utterback T.R."/>
            <person name="Hanna M.C."/>
            <person name="Nguyen D.T."/>
            <person name="Saudek D.M."/>
            <person name="Brandon R.C."/>
            <person name="Fine L.D."/>
            <person name="Fritchman J.L."/>
            <person name="Fuhrmann J.L."/>
            <person name="Geoghagen N.S.M."/>
            <person name="Gnehm C.L."/>
            <person name="McDonald L.A."/>
            <person name="Small K.V."/>
            <person name="Fraser C.M."/>
            <person name="Smith H.O."/>
            <person name="Venter J.C."/>
        </authorList>
    </citation>
    <scope>NUCLEOTIDE SEQUENCE [LARGE SCALE GENOMIC DNA]</scope>
    <source>
        <strain>ATCC 51907 / DSM 11121 / KW20 / Rd</strain>
    </source>
</reference>